<protein>
    <recommendedName>
        <fullName>Beta-defensin 2</fullName>
    </recommendedName>
    <alternativeName>
        <fullName>BNBD-2</fullName>
    </alternativeName>
    <alternativeName>
        <fullName>BNDB-2</fullName>
    </alternativeName>
</protein>
<feature type="peptide" id="PRO_0000044722" description="Beta-defensin 2">
    <location>
        <begin position="1"/>
        <end position="40"/>
    </location>
</feature>
<feature type="disulfide bond" evidence="1">
    <location>
        <begin position="7"/>
        <end position="36"/>
    </location>
</feature>
<feature type="disulfide bond" evidence="1">
    <location>
        <begin position="14"/>
        <end position="29"/>
    </location>
</feature>
<feature type="disulfide bond" evidence="1">
    <location>
        <begin position="19"/>
        <end position="37"/>
    </location>
</feature>
<sequence>VRNHVTCRINRGFCVPIRCPGRTRQIGTCFGPRIKCCRSW</sequence>
<organism>
    <name type="scientific">Bos taurus</name>
    <name type="common">Bovine</name>
    <dbReference type="NCBI Taxonomy" id="9913"/>
    <lineage>
        <taxon>Eukaryota</taxon>
        <taxon>Metazoa</taxon>
        <taxon>Chordata</taxon>
        <taxon>Craniata</taxon>
        <taxon>Vertebrata</taxon>
        <taxon>Euteleostomi</taxon>
        <taxon>Mammalia</taxon>
        <taxon>Eutheria</taxon>
        <taxon>Laurasiatheria</taxon>
        <taxon>Artiodactyla</taxon>
        <taxon>Ruminantia</taxon>
        <taxon>Pecora</taxon>
        <taxon>Bovidae</taxon>
        <taxon>Bovinae</taxon>
        <taxon>Bos</taxon>
    </lineage>
</organism>
<comment type="function">
    <text>Has bactericidal activity. Active against E.coli ML35 and S.aureus 502A.</text>
</comment>
<comment type="subcellular location">
    <subcellularLocation>
        <location>Secreted</location>
    </subcellularLocation>
</comment>
<comment type="tissue specificity">
    <text>Neutrophilic granules.</text>
</comment>
<comment type="similarity">
    <text evidence="2">Belongs to the beta-defensin family.</text>
</comment>
<evidence type="ECO:0000250" key="1"/>
<evidence type="ECO:0000305" key="2"/>
<name>DEFB2_BOVIN</name>
<keyword id="KW-0044">Antibiotic</keyword>
<keyword id="KW-0929">Antimicrobial</keyword>
<keyword id="KW-0211">Defensin</keyword>
<keyword id="KW-0903">Direct protein sequencing</keyword>
<keyword id="KW-1015">Disulfide bond</keyword>
<keyword id="KW-1185">Reference proteome</keyword>
<keyword id="KW-0964">Secreted</keyword>
<reference key="1">
    <citation type="journal article" date="1993" name="J. Biol. Chem.">
        <title>Purification, primary structures, and antibacterial activities of beta-defensins, a new family of antimicrobial peptides from bovine neutrophils.</title>
        <authorList>
            <person name="Selsted M.E."/>
            <person name="Tang Y.-Q."/>
            <person name="Morris W.L."/>
            <person name="McGuire P.A."/>
            <person name="Novotny M.J."/>
            <person name="Smith W."/>
            <person name="Henschen A.H."/>
            <person name="Cullor J.S."/>
        </authorList>
    </citation>
    <scope>PROTEIN SEQUENCE</scope>
    <source>
        <strain>Hereford</strain>
        <tissue>Neutrophil</tissue>
    </source>
</reference>
<proteinExistence type="evidence at protein level"/>
<accession>P46160</accession>
<gene>
    <name type="primary">DEFB2</name>
</gene>
<dbReference type="PIR" id="C45495">
    <property type="entry name" value="C45495"/>
</dbReference>
<dbReference type="SMR" id="P46160"/>
<dbReference type="FunCoup" id="P46160">
    <property type="interactions" value="22"/>
</dbReference>
<dbReference type="PeptideAtlas" id="P46160"/>
<dbReference type="InParanoid" id="P46160"/>
<dbReference type="Proteomes" id="UP000009136">
    <property type="component" value="Unplaced"/>
</dbReference>
<dbReference type="GO" id="GO:0005615">
    <property type="term" value="C:extracellular space"/>
    <property type="evidence" value="ECO:0000318"/>
    <property type="project" value="GO_Central"/>
</dbReference>
<dbReference type="GO" id="GO:0031731">
    <property type="term" value="F:CCR6 chemokine receptor binding"/>
    <property type="evidence" value="ECO:0000318"/>
    <property type="project" value="GO_Central"/>
</dbReference>
<dbReference type="GO" id="GO:0042056">
    <property type="term" value="F:chemoattractant activity"/>
    <property type="evidence" value="ECO:0000318"/>
    <property type="project" value="GO_Central"/>
</dbReference>
<dbReference type="GO" id="GO:0060326">
    <property type="term" value="P:cell chemotaxis"/>
    <property type="evidence" value="ECO:0000318"/>
    <property type="project" value="GO_Central"/>
</dbReference>
<dbReference type="GO" id="GO:0042742">
    <property type="term" value="P:defense response to bacterium"/>
    <property type="evidence" value="ECO:0000318"/>
    <property type="project" value="GO_Central"/>
</dbReference>
<dbReference type="FunFam" id="3.10.360.10:FF:000001">
    <property type="entry name" value="Beta-defensin 1"/>
    <property type="match status" value="1"/>
</dbReference>
<dbReference type="Gene3D" id="3.10.360.10">
    <property type="entry name" value="Antimicrobial Peptide, Beta-defensin 2, Chain A"/>
    <property type="match status" value="1"/>
</dbReference>
<dbReference type="InterPro" id="IPR006080">
    <property type="entry name" value="Beta/alpha-defensin_C"/>
</dbReference>
<dbReference type="InterPro" id="IPR001855">
    <property type="entry name" value="Defensin_beta-like"/>
</dbReference>
<dbReference type="Pfam" id="PF00711">
    <property type="entry name" value="Defensin_beta"/>
    <property type="match status" value="1"/>
</dbReference>
<dbReference type="SMART" id="SM00048">
    <property type="entry name" value="DEFSN"/>
    <property type="match status" value="1"/>
</dbReference>
<dbReference type="SUPFAM" id="SSF57392">
    <property type="entry name" value="Defensin-like"/>
    <property type="match status" value="1"/>
</dbReference>